<accession>Q8X7H7</accession>
<accession>Q7ACL4</accession>
<proteinExistence type="inferred from homology"/>
<evidence type="ECO:0000255" key="1">
    <source>
        <dbReference type="HAMAP-Rule" id="MF_01377"/>
    </source>
</evidence>
<reference key="1">
    <citation type="journal article" date="2001" name="Nature">
        <title>Genome sequence of enterohaemorrhagic Escherichia coli O157:H7.</title>
        <authorList>
            <person name="Perna N.T."/>
            <person name="Plunkett G. III"/>
            <person name="Burland V."/>
            <person name="Mau B."/>
            <person name="Glasner J.D."/>
            <person name="Rose D.J."/>
            <person name="Mayhew G.F."/>
            <person name="Evans P.S."/>
            <person name="Gregor J."/>
            <person name="Kirkpatrick H.A."/>
            <person name="Posfai G."/>
            <person name="Hackett J."/>
            <person name="Klink S."/>
            <person name="Boutin A."/>
            <person name="Shao Y."/>
            <person name="Miller L."/>
            <person name="Grotbeck E.J."/>
            <person name="Davis N.W."/>
            <person name="Lim A."/>
            <person name="Dimalanta E.T."/>
            <person name="Potamousis K."/>
            <person name="Apodaca J."/>
            <person name="Anantharaman T.S."/>
            <person name="Lin J."/>
            <person name="Yen G."/>
            <person name="Schwartz D.C."/>
            <person name="Welch R.A."/>
            <person name="Blattner F.R."/>
        </authorList>
    </citation>
    <scope>NUCLEOTIDE SEQUENCE [LARGE SCALE GENOMIC DNA]</scope>
    <source>
        <strain>O157:H7 / EDL933 / ATCC 700927 / EHEC</strain>
    </source>
</reference>
<reference key="2">
    <citation type="journal article" date="2001" name="DNA Res.">
        <title>Complete genome sequence of enterohemorrhagic Escherichia coli O157:H7 and genomic comparison with a laboratory strain K-12.</title>
        <authorList>
            <person name="Hayashi T."/>
            <person name="Makino K."/>
            <person name="Ohnishi M."/>
            <person name="Kurokawa K."/>
            <person name="Ishii K."/>
            <person name="Yokoyama K."/>
            <person name="Han C.-G."/>
            <person name="Ohtsubo E."/>
            <person name="Nakayama K."/>
            <person name="Murata T."/>
            <person name="Tanaka M."/>
            <person name="Tobe T."/>
            <person name="Iida T."/>
            <person name="Takami H."/>
            <person name="Honda T."/>
            <person name="Sasakawa C."/>
            <person name="Ogasawara N."/>
            <person name="Yasunaga T."/>
            <person name="Kuhara S."/>
            <person name="Shiba T."/>
            <person name="Hattori M."/>
            <person name="Shinagawa H."/>
        </authorList>
    </citation>
    <scope>NUCLEOTIDE SEQUENCE [LARGE SCALE GENOMIC DNA]</scope>
    <source>
        <strain>O157:H7 / Sakai / RIMD 0509952 / EHEC</strain>
    </source>
</reference>
<dbReference type="EC" id="2.7.1.-" evidence="1"/>
<dbReference type="EMBL" id="AE005174">
    <property type="protein sequence ID" value="AAG57146.1"/>
    <property type="molecule type" value="Genomic_DNA"/>
</dbReference>
<dbReference type="EMBL" id="BA000007">
    <property type="protein sequence ID" value="BAB36315.1"/>
    <property type="molecule type" value="Genomic_DNA"/>
</dbReference>
<dbReference type="PIR" id="D90990">
    <property type="entry name" value="D90990"/>
</dbReference>
<dbReference type="PIR" id="F85835">
    <property type="entry name" value="F85835"/>
</dbReference>
<dbReference type="RefSeq" id="NP_310919.1">
    <property type="nucleotide sequence ID" value="NC_002695.1"/>
</dbReference>
<dbReference type="RefSeq" id="WP_000807362.1">
    <property type="nucleotide sequence ID" value="NZ_VOAI01000013.1"/>
</dbReference>
<dbReference type="SMR" id="Q8X7H7"/>
<dbReference type="STRING" id="155864.Z3252"/>
<dbReference type="GeneID" id="75205975"/>
<dbReference type="GeneID" id="916594"/>
<dbReference type="KEGG" id="ece:Z3252"/>
<dbReference type="KEGG" id="ecs:ECs_2892"/>
<dbReference type="PATRIC" id="fig|386585.9.peg.3024"/>
<dbReference type="eggNOG" id="COG1597">
    <property type="taxonomic scope" value="Bacteria"/>
</dbReference>
<dbReference type="HOGENOM" id="CLU_045532_1_1_6"/>
<dbReference type="OMA" id="YFMNIAA"/>
<dbReference type="Proteomes" id="UP000000558">
    <property type="component" value="Chromosome"/>
</dbReference>
<dbReference type="Proteomes" id="UP000002519">
    <property type="component" value="Chromosome"/>
</dbReference>
<dbReference type="GO" id="GO:0005737">
    <property type="term" value="C:cytoplasm"/>
    <property type="evidence" value="ECO:0007669"/>
    <property type="project" value="UniProtKB-SubCell"/>
</dbReference>
<dbReference type="GO" id="GO:0005886">
    <property type="term" value="C:plasma membrane"/>
    <property type="evidence" value="ECO:0007669"/>
    <property type="project" value="TreeGrafter"/>
</dbReference>
<dbReference type="GO" id="GO:0005524">
    <property type="term" value="F:ATP binding"/>
    <property type="evidence" value="ECO:0007669"/>
    <property type="project" value="UniProtKB-UniRule"/>
</dbReference>
<dbReference type="GO" id="GO:0001727">
    <property type="term" value="F:lipid kinase activity"/>
    <property type="evidence" value="ECO:0007669"/>
    <property type="project" value="UniProtKB-UniRule"/>
</dbReference>
<dbReference type="GO" id="GO:0000287">
    <property type="term" value="F:magnesium ion binding"/>
    <property type="evidence" value="ECO:0007669"/>
    <property type="project" value="UniProtKB-UniRule"/>
</dbReference>
<dbReference type="GO" id="GO:0008654">
    <property type="term" value="P:phospholipid biosynthetic process"/>
    <property type="evidence" value="ECO:0007669"/>
    <property type="project" value="UniProtKB-UniRule"/>
</dbReference>
<dbReference type="FunFam" id="2.60.200.40:FF:000008">
    <property type="entry name" value="Probable lipid kinase YegS"/>
    <property type="match status" value="1"/>
</dbReference>
<dbReference type="FunFam" id="3.40.50.10330:FF:000008">
    <property type="entry name" value="Probable lipid kinase YegS"/>
    <property type="match status" value="1"/>
</dbReference>
<dbReference type="Gene3D" id="2.60.200.40">
    <property type="match status" value="1"/>
</dbReference>
<dbReference type="Gene3D" id="3.40.50.10330">
    <property type="entry name" value="Probable inorganic polyphosphate/atp-NAD kinase, domain 1"/>
    <property type="match status" value="1"/>
</dbReference>
<dbReference type="HAMAP" id="MF_01377">
    <property type="entry name" value="YegS"/>
    <property type="match status" value="1"/>
</dbReference>
<dbReference type="InterPro" id="IPR017438">
    <property type="entry name" value="ATP-NAD_kinase_N"/>
</dbReference>
<dbReference type="InterPro" id="IPR005218">
    <property type="entry name" value="Diacylglycerol/lipid_kinase"/>
</dbReference>
<dbReference type="InterPro" id="IPR001206">
    <property type="entry name" value="Diacylglycerol_kinase_cat_dom"/>
</dbReference>
<dbReference type="InterPro" id="IPR022433">
    <property type="entry name" value="Lip_kinase_YegS"/>
</dbReference>
<dbReference type="InterPro" id="IPR050187">
    <property type="entry name" value="Lipid_Phosphate_FormReg"/>
</dbReference>
<dbReference type="InterPro" id="IPR016064">
    <property type="entry name" value="NAD/diacylglycerol_kinase_sf"/>
</dbReference>
<dbReference type="InterPro" id="IPR045540">
    <property type="entry name" value="YegS/DAGK_C"/>
</dbReference>
<dbReference type="NCBIfam" id="TIGR03702">
    <property type="entry name" value="lip_kinase_YegS"/>
    <property type="match status" value="1"/>
</dbReference>
<dbReference type="NCBIfam" id="NF009602">
    <property type="entry name" value="PRK13054.1"/>
    <property type="match status" value="1"/>
</dbReference>
<dbReference type="NCBIfam" id="TIGR00147">
    <property type="entry name" value="YegS/Rv2252/BmrU family lipid kinase"/>
    <property type="match status" value="1"/>
</dbReference>
<dbReference type="PANTHER" id="PTHR12358:SF106">
    <property type="entry name" value="LIPID KINASE YEGS"/>
    <property type="match status" value="1"/>
</dbReference>
<dbReference type="PANTHER" id="PTHR12358">
    <property type="entry name" value="SPHINGOSINE KINASE"/>
    <property type="match status" value="1"/>
</dbReference>
<dbReference type="Pfam" id="PF00781">
    <property type="entry name" value="DAGK_cat"/>
    <property type="match status" value="1"/>
</dbReference>
<dbReference type="Pfam" id="PF19279">
    <property type="entry name" value="YegS_C"/>
    <property type="match status" value="1"/>
</dbReference>
<dbReference type="SMART" id="SM00046">
    <property type="entry name" value="DAGKc"/>
    <property type="match status" value="1"/>
</dbReference>
<dbReference type="SUPFAM" id="SSF111331">
    <property type="entry name" value="NAD kinase/diacylglycerol kinase-like"/>
    <property type="match status" value="1"/>
</dbReference>
<dbReference type="PROSITE" id="PS50146">
    <property type="entry name" value="DAGK"/>
    <property type="match status" value="1"/>
</dbReference>
<protein>
    <recommendedName>
        <fullName evidence="1">Probable lipid kinase YegS</fullName>
        <ecNumber evidence="1">2.7.1.-</ecNumber>
    </recommendedName>
</protein>
<feature type="chain" id="PRO_0000292143" description="Probable lipid kinase YegS">
    <location>
        <begin position="1"/>
        <end position="299"/>
    </location>
</feature>
<feature type="domain" description="DAGKc" evidence="1">
    <location>
        <begin position="2"/>
        <end position="133"/>
    </location>
</feature>
<feature type="active site" description="Proton acceptor" evidence="1">
    <location>
        <position position="271"/>
    </location>
</feature>
<feature type="binding site" evidence="1">
    <location>
        <position position="40"/>
    </location>
    <ligand>
        <name>ATP</name>
        <dbReference type="ChEBI" id="CHEBI:30616"/>
    </ligand>
</feature>
<feature type="binding site" evidence="1">
    <location>
        <begin position="66"/>
        <end position="72"/>
    </location>
    <ligand>
        <name>ATP</name>
        <dbReference type="ChEBI" id="CHEBI:30616"/>
    </ligand>
</feature>
<feature type="binding site" evidence="1">
    <location>
        <position position="95"/>
    </location>
    <ligand>
        <name>ATP</name>
        <dbReference type="ChEBI" id="CHEBI:30616"/>
    </ligand>
</feature>
<feature type="binding site" evidence="1">
    <location>
        <position position="215"/>
    </location>
    <ligand>
        <name>Mg(2+)</name>
        <dbReference type="ChEBI" id="CHEBI:18420"/>
    </ligand>
</feature>
<feature type="binding site" evidence="1">
    <location>
        <position position="218"/>
    </location>
    <ligand>
        <name>Mg(2+)</name>
        <dbReference type="ChEBI" id="CHEBI:18420"/>
    </ligand>
</feature>
<feature type="binding site" evidence="1">
    <location>
        <position position="220"/>
    </location>
    <ligand>
        <name>Mg(2+)</name>
        <dbReference type="ChEBI" id="CHEBI:18420"/>
    </ligand>
</feature>
<gene>
    <name evidence="1" type="primary">yegS</name>
    <name type="ordered locus">Z3252</name>
    <name type="ordered locus">ECs2892</name>
</gene>
<sequence>MAEFPASLLILNGKSTDNLPLREAIMLLREEGMTIHVRVTWEKGDAARYVEEARKLGVATVIAGGGDGTINEVSTALIQCEGDDIPALGILPLGTANDFATSVGIPEALDKALKLAIAGNAIAIDMAQVNKQTCFINMATGGFGTRITTETPEKLKAALGGVSYIIHGLMRMDTLQPDRCEIRGENFHWQGDALVIGIGNGRQAGGGQQLCPNALINDGLLQLRIFTGDEILPALVSTLKSDEDNPNIIEGASSWFDIQAPHEITFNLDGEPLSGQNFHIEILPAALRCRLPPDCPLLR</sequence>
<organism>
    <name type="scientific">Escherichia coli O157:H7</name>
    <dbReference type="NCBI Taxonomy" id="83334"/>
    <lineage>
        <taxon>Bacteria</taxon>
        <taxon>Pseudomonadati</taxon>
        <taxon>Pseudomonadota</taxon>
        <taxon>Gammaproteobacteria</taxon>
        <taxon>Enterobacterales</taxon>
        <taxon>Enterobacteriaceae</taxon>
        <taxon>Escherichia</taxon>
    </lineage>
</organism>
<keyword id="KW-0067">ATP-binding</keyword>
<keyword id="KW-0963">Cytoplasm</keyword>
<keyword id="KW-0418">Kinase</keyword>
<keyword id="KW-0444">Lipid biosynthesis</keyword>
<keyword id="KW-0443">Lipid metabolism</keyword>
<keyword id="KW-0460">Magnesium</keyword>
<keyword id="KW-0479">Metal-binding</keyword>
<keyword id="KW-0547">Nucleotide-binding</keyword>
<keyword id="KW-0594">Phospholipid biosynthesis</keyword>
<keyword id="KW-1208">Phospholipid metabolism</keyword>
<keyword id="KW-1185">Reference proteome</keyword>
<keyword id="KW-0808">Transferase</keyword>
<comment type="function">
    <text evidence="1">Probably phosphorylates lipids; the in vivo substrate is unknown.</text>
</comment>
<comment type="cofactor">
    <cofactor evidence="1">
        <name>Mg(2+)</name>
        <dbReference type="ChEBI" id="CHEBI:18420"/>
    </cofactor>
    <cofactor evidence="1">
        <name>Ca(2+)</name>
        <dbReference type="ChEBI" id="CHEBI:29108"/>
    </cofactor>
    <text evidence="1">Binds 1 Mg(2+) ion per subunit. Ca(2+) may be able to substitute.</text>
</comment>
<comment type="subcellular location">
    <subcellularLocation>
        <location evidence="1">Cytoplasm</location>
    </subcellularLocation>
</comment>
<comment type="similarity">
    <text evidence="1">Belongs to the diacylglycerol/lipid kinase family. YegS lipid kinase subfamily.</text>
</comment>
<name>YEGS_ECO57</name>